<protein>
    <recommendedName>
        <fullName evidence="21">Isopenicillin N synthase</fullName>
        <shortName evidence="21">IPNS</shortName>
        <ecNumber evidence="4 5 6">1.21.3.1</ecNumber>
    </recommendedName>
    <alternativeName>
        <fullName evidence="22">Isopenicillin cyclase</fullName>
    </alternativeName>
    <alternativeName>
        <fullName evidence="21">Penicillin biosynthetis cluster protein ipnA</fullName>
    </alternativeName>
</protein>
<feature type="chain" id="PRO_0000455268" description="Isopenicillin N synthase">
    <location>
        <begin position="1"/>
        <end position="331"/>
    </location>
</feature>
<feature type="domain" description="Fe2OG dioxygenase" evidence="2">
    <location>
        <begin position="181"/>
        <end position="288"/>
    </location>
</feature>
<feature type="binding site" evidence="1">
    <location>
        <position position="87"/>
    </location>
    <ligand>
        <name>isopenicillin N</name>
        <dbReference type="ChEBI" id="CHEBI:58399"/>
    </ligand>
</feature>
<feature type="binding site" evidence="1">
    <location>
        <position position="87"/>
    </location>
    <ligand>
        <name>N-[(5S)-5-amino-5-carboxypentanoyl]-L-cysteinyl-D-valine</name>
        <dbReference type="ChEBI" id="CHEBI:58572"/>
    </ligand>
</feature>
<feature type="binding site" evidence="1">
    <location>
        <position position="91"/>
    </location>
    <ligand>
        <name>isopenicillin N</name>
        <dbReference type="ChEBI" id="CHEBI:58399"/>
    </ligand>
</feature>
<feature type="binding site" evidence="1">
    <location>
        <position position="91"/>
    </location>
    <ligand>
        <name>N-[(5S)-5-amino-5-carboxypentanoyl]-L-cysteinyl-D-valine</name>
        <dbReference type="ChEBI" id="CHEBI:58572"/>
    </ligand>
</feature>
<feature type="binding site" evidence="1">
    <location>
        <position position="183"/>
    </location>
    <ligand>
        <name>isopenicillin N</name>
        <dbReference type="ChEBI" id="CHEBI:58399"/>
    </ligand>
</feature>
<feature type="binding site" evidence="1">
    <location>
        <position position="183"/>
    </location>
    <ligand>
        <name>N-[(5S)-5-amino-5-carboxypentanoyl]-L-cysteinyl-D-valine</name>
        <dbReference type="ChEBI" id="CHEBI:58572"/>
    </ligand>
</feature>
<feature type="binding site" evidence="1">
    <location>
        <position position="189"/>
    </location>
    <ligand>
        <name>isopenicillin N</name>
        <dbReference type="ChEBI" id="CHEBI:58399"/>
    </ligand>
</feature>
<feature type="binding site" evidence="1">
    <location>
        <position position="189"/>
    </location>
    <ligand>
        <name>N-[(5S)-5-amino-5-carboxypentanoyl]-L-cysteinyl-D-valine</name>
        <dbReference type="ChEBI" id="CHEBI:58572"/>
    </ligand>
</feature>
<feature type="binding site" evidence="2">
    <location>
        <position position="214"/>
    </location>
    <ligand>
        <name>Fe(2+)</name>
        <dbReference type="ChEBI" id="CHEBI:29033"/>
    </ligand>
</feature>
<feature type="binding site" evidence="1">
    <location>
        <position position="214"/>
    </location>
    <ligand>
        <name>N-[(5S)-5-amino-5-carboxypentanoyl]-L-cysteinyl-D-valine</name>
        <dbReference type="ChEBI" id="CHEBI:58572"/>
    </ligand>
</feature>
<feature type="binding site" evidence="2">
    <location>
        <position position="216"/>
    </location>
    <ligand>
        <name>Fe(2+)</name>
        <dbReference type="ChEBI" id="CHEBI:29033"/>
    </ligand>
</feature>
<feature type="binding site" evidence="1">
    <location>
        <position position="216"/>
    </location>
    <ligand>
        <name>N-[(5S)-5-amino-5-carboxypentanoyl]-L-cysteinyl-D-valine</name>
        <dbReference type="ChEBI" id="CHEBI:58572"/>
    </ligand>
</feature>
<feature type="binding site" evidence="2">
    <location>
        <position position="270"/>
    </location>
    <ligand>
        <name>Fe(2+)</name>
        <dbReference type="ChEBI" id="CHEBI:29033"/>
    </ligand>
</feature>
<feature type="binding site" evidence="2">
    <location>
        <position position="279"/>
    </location>
    <ligand>
        <name>2-oxoglutarate</name>
        <dbReference type="ChEBI" id="CHEBI:16810"/>
    </ligand>
</feature>
<feature type="binding site" evidence="1">
    <location>
        <position position="281"/>
    </location>
    <ligand>
        <name>isopenicillin N</name>
        <dbReference type="ChEBI" id="CHEBI:58399"/>
    </ligand>
</feature>
<feature type="binding site" evidence="1">
    <location>
        <position position="281"/>
    </location>
    <ligand>
        <name>N-[(5S)-5-amino-5-carboxypentanoyl]-L-cysteinyl-D-valine</name>
        <dbReference type="ChEBI" id="CHEBI:58572"/>
    </ligand>
</feature>
<evidence type="ECO:0000250" key="1">
    <source>
        <dbReference type="UniProtKB" id="P05326"/>
    </source>
</evidence>
<evidence type="ECO:0000255" key="2">
    <source>
        <dbReference type="PROSITE-ProRule" id="PRU00805"/>
    </source>
</evidence>
<evidence type="ECO:0000269" key="3">
    <source>
    </source>
</evidence>
<evidence type="ECO:0000269" key="4">
    <source>
    </source>
</evidence>
<evidence type="ECO:0000269" key="5">
    <source>
    </source>
</evidence>
<evidence type="ECO:0000269" key="6">
    <source>
    </source>
</evidence>
<evidence type="ECO:0000269" key="7">
    <source>
    </source>
</evidence>
<evidence type="ECO:0000269" key="8">
    <source>
    </source>
</evidence>
<evidence type="ECO:0000269" key="9">
    <source>
    </source>
</evidence>
<evidence type="ECO:0000269" key="10">
    <source>
    </source>
</evidence>
<evidence type="ECO:0000269" key="11">
    <source>
    </source>
</evidence>
<evidence type="ECO:0000269" key="12">
    <source>
    </source>
</evidence>
<evidence type="ECO:0000269" key="13">
    <source>
    </source>
</evidence>
<evidence type="ECO:0000269" key="14">
    <source>
    </source>
</evidence>
<evidence type="ECO:0000269" key="15">
    <source>
    </source>
</evidence>
<evidence type="ECO:0000269" key="16">
    <source>
    </source>
</evidence>
<evidence type="ECO:0000269" key="17">
    <source>
    </source>
</evidence>
<evidence type="ECO:0000269" key="18">
    <source>
    </source>
</evidence>
<evidence type="ECO:0000269" key="19">
    <source>
    </source>
</evidence>
<evidence type="ECO:0000269" key="20">
    <source>
    </source>
</evidence>
<evidence type="ECO:0000303" key="21">
    <source>
    </source>
</evidence>
<evidence type="ECO:0000305" key="22"/>
<reference key="1">
    <citation type="journal article" date="2008" name="Nat. Biotechnol.">
        <title>Genome sequencing and analysis of the filamentous fungus Penicillium chrysogenum.</title>
        <authorList>
            <person name="van den Berg M.A."/>
            <person name="Albang R."/>
            <person name="Albermann K."/>
            <person name="Badger J.H."/>
            <person name="Daran J.-M."/>
            <person name="Driessen A.J.M."/>
            <person name="Garcia-Estrada C."/>
            <person name="Fedorova N.D."/>
            <person name="Harris D.M."/>
            <person name="Heijne W.H.M."/>
            <person name="Joardar V.S."/>
            <person name="Kiel J.A.K.W."/>
            <person name="Kovalchuk A."/>
            <person name="Martin J.F."/>
            <person name="Nierman W.C."/>
            <person name="Nijland J.G."/>
            <person name="Pronk J.T."/>
            <person name="Roubos J.A."/>
            <person name="van der Klei I.J."/>
            <person name="van Peij N.N.M.E."/>
            <person name="Veenhuis M."/>
            <person name="von Doehren H."/>
            <person name="Wagner C."/>
            <person name="Wortman J.R."/>
            <person name="Bovenberg R.A.L."/>
        </authorList>
    </citation>
    <scope>NUCLEOTIDE SEQUENCE [LARGE SCALE GENOMIC DNA]</scope>
    <source>
        <strain>ATCC 28089 / DSM 1075 / NRRL 1951 / Wisconsin 54-1255</strain>
    </source>
</reference>
<reference key="2">
    <citation type="journal article" date="1986" name="J. Bacteriol.">
        <title>Glucose represses formation of delta-(L-alpha-aminoadipyl)-L-cysteinyl-D-valine and isopenicillin N synthase but not penicillin acyltransferase in Penicillium chrysogenum.</title>
        <authorList>
            <person name="Revilla G."/>
            <person name="Ramos F.R."/>
            <person name="Lopez-Nieto M.J."/>
            <person name="Alvarez E."/>
            <person name="Martin J.F."/>
        </authorList>
    </citation>
    <scope>INDUCTION</scope>
</reference>
<reference key="3">
    <citation type="journal article" date="1990" name="Biotechnology (N.Y.)">
        <title>Cloning and heterologous expression of the penicillin biosynthetic gene cluster from penicillum chrysogenum.</title>
        <authorList>
            <person name="Smith D.J."/>
            <person name="Burnham M.K."/>
            <person name="Edwards J."/>
            <person name="Earl A.J."/>
            <person name="Turner G."/>
        </authorList>
    </citation>
    <scope>FUNCTION</scope>
    <scope>CATALYTIC ACTIVITY</scope>
    <scope>PATHWAY</scope>
</reference>
<reference key="4">
    <citation type="journal article" date="1990" name="FEBS Lett.">
        <title>Acyl coenzyme A: 6-aminopenicillanic acid acyltransferase from Penicillium chrysogenum and Aspergillus nidulans.</title>
        <authorList>
            <person name="Whiteman P.A."/>
            <person name="Abraham E.P."/>
            <person name="Baldwin J.E."/>
            <person name="Fleming M.D."/>
            <person name="Schofield C.J."/>
            <person name="Sutherland J.D."/>
            <person name="Willis A.C."/>
        </authorList>
    </citation>
    <scope>FUNCTION</scope>
</reference>
<reference key="5">
    <citation type="journal article" date="1990" name="J. Bacteriol.">
        <title>Molecular characterization of the acyl-coenzyme A:isopenicillin N acyltransferase gene (penDE) from Penicillium chrysogenum and Aspergillus nidulans and activity of recombinant enzyme in Escherichia coli.</title>
        <authorList>
            <person name="Tobin M.B."/>
            <person name="Fleming M.D."/>
            <person name="Skatrud P.L."/>
            <person name="Miller J.R."/>
        </authorList>
    </citation>
    <scope>FUNCTION</scope>
</reference>
<reference key="6">
    <citation type="journal article" date="1991" name="EMBO J.">
        <title>Localization of the pathway of the penicillin biosynthesis in Penicillium chrysogenum.</title>
        <authorList>
            <person name="Mueller W.H."/>
            <person name="van der Krift T.P."/>
            <person name="Krouwer A.J."/>
            <person name="Woesten H.A."/>
            <person name="van der Voort L.H."/>
            <person name="Smaal E.B."/>
            <person name="Verkleij A.J."/>
        </authorList>
    </citation>
    <scope>SUBCELLULAR LOCATION</scope>
</reference>
<reference key="7">
    <citation type="journal article" date="1992" name="J. Chem. Technol. Biotechnol.">
        <title>Oxygen utilisation by isopenicillin N synthase from Penicillium chrysogenum.</title>
        <authorList>
            <person name="Bainbridge Z.A."/>
            <person name="Scott R.I."/>
            <person name="Perry D."/>
        </authorList>
    </citation>
    <scope>FUNCTION</scope>
    <scope>CATALYTIC ACTIVITY</scope>
    <scope>PATHWAY</scope>
</reference>
<reference key="8">
    <citation type="journal article" date="1992" name="J. Med. Chem.">
        <title>Substrate specificity of isopenicillin N synthase.</title>
        <authorList>
            <person name="Huffman G.W."/>
            <person name="Gesellchen P.D."/>
            <person name="Turner J.R."/>
            <person name="Rothenberger R.B."/>
            <person name="Osborne H.E."/>
            <person name="Miller F.D."/>
            <person name="Chapman J.L."/>
            <person name="Queener S.W."/>
        </authorList>
    </citation>
    <scope>FUNCTION</scope>
    <scope>CATALYTIC ACTIVITY</scope>
    <scope>SUBSTRATE SPECIFICITY</scope>
    <scope>PATHWAY</scope>
</reference>
<reference key="9">
    <citation type="journal article" date="1993" name="J. Biol. Chem.">
        <title>Subcellular compartmentation of penicillin biosynthesis in Penicillium chrysogenum. The amino acid precursors are derived from the vacuole.</title>
        <authorList>
            <person name="Lendenfeld T."/>
            <person name="Ghali D."/>
            <person name="Wolschek M."/>
            <person name="Kubicek-Pranz E.M."/>
            <person name="Kubicek C.P."/>
        </authorList>
    </citation>
    <scope>FUNCTION</scope>
</reference>
<reference key="10">
    <citation type="journal article" date="1996" name="Mol. Microbiol.">
        <title>Characterization of a Penicillium chrysogenum gene encoding a PacC transcription factor and its binding sites in the divergent pcbAB-pcbC promoter of the penicillin biosynthetic cluster.</title>
        <authorList>
            <person name="Suarez T."/>
            <person name="Penalva M.A."/>
        </authorList>
    </citation>
    <scope>INDUCTION</scope>
</reference>
<reference key="11">
    <citation type="journal article" date="1997" name="Biochem. Biophys. Res. Commun.">
        <title>ACV synthetase: expression of amino acid activating domains of the Penicillium chrysogenum enzyme in Aspergillus nidulans.</title>
        <authorList>
            <person name="Etchegaray A."/>
            <person name="Dieckmann R."/>
            <person name="Kennedy J."/>
            <person name="Turner G."/>
            <person name="von Doehren H."/>
        </authorList>
    </citation>
    <scope>FUNCTION</scope>
</reference>
<reference key="12">
    <citation type="journal article" date="1997" name="Biochem. J.">
        <title>Purification and characterization of delta-(L-alpha-aminoadipyl)-L-cysteinyl-D-valine synthetase from Penicillium chrysogenum.</title>
        <authorList>
            <person name="Theilgaard H.B."/>
            <person name="Kristiansen K.N."/>
            <person name="Henriksen C.M."/>
            <person name="Nielsen J."/>
        </authorList>
    </citation>
    <scope>FUNCTION</scope>
</reference>
<reference key="13">
    <citation type="journal article" date="2002" name="Fungal Genet. Biol.">
        <title>delta-(L-alpha-Aminoadipyl)-L-cysteinyl-D-valine synthetase, that mediates the first committed step in penicillin biosynthesis, is a cytosolic enzyme.</title>
        <authorList>
            <person name="van der Lende T.R."/>
            <person name="van de Kamp M."/>
            <person name="Berg M."/>
            <person name="Sjollema K."/>
            <person name="Bovenberg R.A."/>
            <person name="Veenhuis M."/>
            <person name="Konings W.N."/>
            <person name="Driessen A.J."/>
        </authorList>
    </citation>
    <scope>SUBCELLULAR LOCATION</scope>
</reference>
<reference key="14">
    <citation type="journal article" date="2009" name="Metab. Eng.">
        <title>Heterologous production of non-ribosomal peptide LLD-ACV in Saccharomyces cerevisiae.</title>
        <authorList>
            <person name="Siewers V."/>
            <person name="Chen X."/>
            <person name="Huang L."/>
            <person name="Zhang J."/>
            <person name="Nielsen J."/>
        </authorList>
    </citation>
    <scope>FUNCTION</scope>
</reference>
<reference key="15">
    <citation type="journal article" date="2012" name="Biochimie">
        <title>Motifs in the C-terminal region of the Penicillium chrysogenum ACV synthetase are essential for valine epimerization and processivity of tripeptide formation.</title>
        <authorList>
            <person name="Wu X."/>
            <person name="Garcia-Estrada C."/>
            <person name="Vaca I."/>
            <person name="Martin J.F."/>
        </authorList>
    </citation>
    <scope>FUNCTION</scope>
</reference>
<reference key="16">
    <citation type="journal article" date="2012" name="Fungal Genet. Biol.">
        <title>The regulatory factor PcRFX1 controls the expression of the three genes of beta-lactam biosynthesis in Penicillium chrysogenum.</title>
        <authorList>
            <person name="Dominguez-Santos R."/>
            <person name="Martin J.F."/>
            <person name="Kosalkova K."/>
            <person name="Prieto C."/>
            <person name="Ullan R.V."/>
            <person name="Garcia-Estrada C."/>
        </authorList>
    </citation>
    <scope>INDUCTION</scope>
</reference>
<reference key="17">
    <citation type="journal article" date="2013" name="Appl. Microbiol. Biotechnol.">
        <title>A vacuolar membrane protein affects drastically the biosynthesis of the ACV tripeptide and the beta-lactam pathway of Penicillium chrysogenum.</title>
        <authorList>
            <person name="Fernandez-Aguado M."/>
            <person name="Teijeira F."/>
            <person name="Martin J.F."/>
            <person name="Ullan R.V."/>
        </authorList>
    </citation>
    <scope>FUNCTION</scope>
</reference>
<reference key="18">
    <citation type="journal article" date="2013" name="Appl. Microbiol. Biotechnol.">
        <title>The transport of phenylacetic acid across the peroxisomal membrane is mediated by the PaaT protein in Penicillium chrysogenum.</title>
        <authorList>
            <person name="Fernandez-Aguado M."/>
            <person name="Ullan R.V."/>
            <person name="Teijeira F."/>
            <person name="Rodriguez-Castro R."/>
            <person name="Martin J.F."/>
        </authorList>
    </citation>
    <scope>FUNCTION</scope>
</reference>
<reference key="19">
    <citation type="journal article" date="2014" name="Metab. Eng.">
        <title>New insights into the isopenicillin N transport in Penicillium chrysogenum.</title>
        <authorList>
            <person name="Fernandez-Aguado M."/>
            <person name="Martin J.F."/>
            <person name="Rodriguez-Castro R."/>
            <person name="Garcia-Estrada C."/>
            <person name="Albillos S.M."/>
            <person name="Teijeira F."/>
            <person name="Ullan R.V."/>
        </authorList>
    </citation>
    <scope>FUNCTION</scope>
</reference>
<comment type="function">
    <text evidence="4 5 6 8 9 10 11 12 14 15 17 19 20">Isopenicillin N synthase; part of the gene cluster that mediates the biosynthesis of penicillin, the world's most important antibiotic (PubMed:1368505). The first step of the pathway is performed by the trimodular NRPS acvA that produces the tripeptide N-[(5S)-5-amino-5-carboxypentanoyl]-L-cysteinyl-D-valine (LLD-ACV or ACV) via condensation of the 3 residues L-2-aminoadipate, L-cysteine and L-valine (PubMed:19686863, PubMed:21889568, PubMed:9266851, PubMed:9355751). The precursor amino acids for penicillin biosynthesis are withdrawn from the vacuolar amino acid pool by the MFS-type transporter penV (PubMed:22777282, PubMed:8416970). Each of the constituent amino acids of the tripeptide acv are activated as aminoacyl-adenylates with peptide bonds formed through the participation of amino acid thioester intermediates (PubMed:21889568, PubMed:9266851). The tripeptide ACV is then cyclized to form isopenicillin N (IPN) by the isopenicillin N synthase ipnA that forms the beta-lactam nucleus (PubMed:1368505, PubMed:1369045, PubMed:1588566). Finally, the alpha-aminoadipyl side chain is exchanged for phenylacetic acid by the isopenicillin N acyltransferase aatA to yield penicillin (PubMed:1368505, PubMed:2110531, PubMed:2120195). This step occurs in the peroxisomal matrix and the penM and paaT transporters are involved in the isopenicillin N and phenylacetic acid import into the peroxisome, respectively (PubMed:23053082, PubMed:24480587).</text>
</comment>
<comment type="catalytic activity">
    <reaction evidence="4 5 6">
        <text>N-[(5S)-5-amino-5-carboxypentanoyl]-L-cysteinyl-D-valine + O2 = isopenicillin N + 2 H2O</text>
        <dbReference type="Rhea" id="RHEA:22428"/>
        <dbReference type="ChEBI" id="CHEBI:15377"/>
        <dbReference type="ChEBI" id="CHEBI:15379"/>
        <dbReference type="ChEBI" id="CHEBI:58399"/>
        <dbReference type="ChEBI" id="CHEBI:58572"/>
        <dbReference type="EC" id="1.21.3.1"/>
    </reaction>
    <physiologicalReaction direction="left-to-right" evidence="4 5 6">
        <dbReference type="Rhea" id="RHEA:22429"/>
    </physiologicalReaction>
</comment>
<comment type="cofactor">
    <cofactor evidence="2">
        <name>Fe(2+)</name>
        <dbReference type="ChEBI" id="CHEBI:29033"/>
    </cofactor>
    <text evidence="2">Binds 1 Fe(2+) ion per subunit.</text>
</comment>
<comment type="pathway">
    <text evidence="4 5 6">Antibiotic biosynthesis; penicillin G biosynthesis; penicillin G from L-alpha-aminoadipate and L-cysteine and L-valine: step 2/3.</text>
</comment>
<comment type="subcellular location">
    <subcellularLocation>
        <location evidence="3 7">Cytoplasm</location>
        <location evidence="3 7">Cytosol</location>
    </subcellularLocation>
</comment>
<comment type="induction">
    <text evidence="13 16 18">Expression is repressed by glucose (PubMed:3096965). The transcription factor rfx1 controls penicillin biosynthesis through the regulation of the acvA, ipnA and aatA transcription (PubMed:22960281). Expression is also controlled by the transcription factor pacC that specifically recognizes the 5'-GCCARG-3' sequence in the promoter (PubMed:8736532).</text>
</comment>
<comment type="similarity">
    <text evidence="22">Belongs to the iron/ascorbate-dependent oxidoreductase family.</text>
</comment>
<keyword id="KW-0045">Antibiotic biosynthesis</keyword>
<keyword id="KW-0963">Cytoplasm</keyword>
<keyword id="KW-0223">Dioxygenase</keyword>
<keyword id="KW-0408">Iron</keyword>
<keyword id="KW-0479">Metal-binding</keyword>
<keyword id="KW-0560">Oxidoreductase</keyword>
<keyword id="KW-1185">Reference proteome</keyword>
<gene>
    <name evidence="21" type="primary">ipnA</name>
    <name type="synonym">pcbC</name>
    <name type="ORF">PCH_Pc21g21380</name>
</gene>
<name>IPNA_PENRW</name>
<organism>
    <name type="scientific">Penicillium rubens (strain ATCC 28089 / DSM 1075 / NRRL 1951 / Wisconsin 54-1255)</name>
    <name type="common">Penicillium chrysogenum</name>
    <dbReference type="NCBI Taxonomy" id="500485"/>
    <lineage>
        <taxon>Eukaryota</taxon>
        <taxon>Fungi</taxon>
        <taxon>Dikarya</taxon>
        <taxon>Ascomycota</taxon>
        <taxon>Pezizomycotina</taxon>
        <taxon>Eurotiomycetes</taxon>
        <taxon>Eurotiomycetidae</taxon>
        <taxon>Eurotiales</taxon>
        <taxon>Aspergillaceae</taxon>
        <taxon>Penicillium</taxon>
        <taxon>Penicillium chrysogenum species complex</taxon>
    </lineage>
</organism>
<sequence length="331" mass="38010">MASTPKANVPKIDVSPLFGDNMEEKMKVARAIDAASRDTGFFYAVNHGVDVKRLSNKTREFHFSITDEEKWDLAIRAYNKEHQDQIRAGYYLSIPEKKAVESFCYLNPNFKPDHPLIQSKTPTHEVNVWPDEKKHPGFREFAEQYYWDVFGLSSALLRGYALALGKEEDFFSRHFKKEDALSSVVLIRYPYLNPYPPAAIKTAEDGTKLSFEWHEDVSLITVLYQSDVANLQVEMPQGYLDIEADDNAYLVNCGSYMAHITNNYYPAPIHRVKWVNEERQSLPFFVNLGFNDTVQPWDPSKEDGKTDQRPISYGDYLQNGLVSLINKNGQT</sequence>
<dbReference type="EC" id="1.21.3.1" evidence="4 5 6"/>
<dbReference type="EMBL" id="AM920436">
    <property type="protein sequence ID" value="CAP97035.1"/>
    <property type="molecule type" value="Genomic_DNA"/>
</dbReference>
<dbReference type="RefSeq" id="XP_002569113.1">
    <property type="nucleotide sequence ID" value="XM_002569067.1"/>
</dbReference>
<dbReference type="SMR" id="B6HLU0"/>
<dbReference type="STRING" id="500485.B6HLU0"/>
<dbReference type="KEGG" id="pcs:N7525_006405"/>
<dbReference type="VEuPathDB" id="FungiDB:PCH_Pc21g21380"/>
<dbReference type="eggNOG" id="KOG0143">
    <property type="taxonomic scope" value="Eukaryota"/>
</dbReference>
<dbReference type="HOGENOM" id="CLU_010119_6_1_1"/>
<dbReference type="OMA" id="EADDNAY"/>
<dbReference type="OrthoDB" id="288590at2759"/>
<dbReference type="UniPathway" id="UPA00149">
    <property type="reaction ID" value="UER00240"/>
</dbReference>
<dbReference type="Proteomes" id="UP000000724">
    <property type="component" value="Contig Pc00c21"/>
</dbReference>
<dbReference type="GO" id="GO:0005829">
    <property type="term" value="C:cytosol"/>
    <property type="evidence" value="ECO:0007669"/>
    <property type="project" value="UniProtKB-SubCell"/>
</dbReference>
<dbReference type="GO" id="GO:0051213">
    <property type="term" value="F:dioxygenase activity"/>
    <property type="evidence" value="ECO:0007669"/>
    <property type="project" value="UniProtKB-KW"/>
</dbReference>
<dbReference type="GO" id="GO:0005506">
    <property type="term" value="F:iron ion binding"/>
    <property type="evidence" value="ECO:0007669"/>
    <property type="project" value="InterPro"/>
</dbReference>
<dbReference type="GO" id="GO:0042318">
    <property type="term" value="P:penicillin biosynthetic process"/>
    <property type="evidence" value="ECO:0000314"/>
    <property type="project" value="GO_Central"/>
</dbReference>
<dbReference type="Gene3D" id="2.60.120.330">
    <property type="entry name" value="B-lactam Antibiotic, Isopenicillin N Synthase, Chain"/>
    <property type="match status" value="1"/>
</dbReference>
<dbReference type="InterPro" id="IPR026992">
    <property type="entry name" value="DIOX_N"/>
</dbReference>
<dbReference type="InterPro" id="IPR044861">
    <property type="entry name" value="IPNS-like_FE2OG_OXY"/>
</dbReference>
<dbReference type="InterPro" id="IPR027443">
    <property type="entry name" value="IPNS-like_sf"/>
</dbReference>
<dbReference type="InterPro" id="IPR002057">
    <property type="entry name" value="Isopenicillin-N_synth_CS"/>
</dbReference>
<dbReference type="InterPro" id="IPR005123">
    <property type="entry name" value="Oxoglu/Fe-dep_dioxygenase_dom"/>
</dbReference>
<dbReference type="PANTHER" id="PTHR10209:SF867">
    <property type="entry name" value="2-OXOGLUTARATE (2OG) AND FE(II)-DEPENDENT OXYGENASE SUPERFAMILY PROTEIN"/>
    <property type="match status" value="1"/>
</dbReference>
<dbReference type="PANTHER" id="PTHR10209">
    <property type="entry name" value="OXIDOREDUCTASE, 2OG-FE II OXYGENASE FAMILY PROTEIN"/>
    <property type="match status" value="1"/>
</dbReference>
<dbReference type="Pfam" id="PF03171">
    <property type="entry name" value="2OG-FeII_Oxy"/>
    <property type="match status" value="1"/>
</dbReference>
<dbReference type="Pfam" id="PF14226">
    <property type="entry name" value="DIOX_N"/>
    <property type="match status" value="1"/>
</dbReference>
<dbReference type="PRINTS" id="PR00682">
    <property type="entry name" value="IPNSYNTHASE"/>
</dbReference>
<dbReference type="SUPFAM" id="SSF51197">
    <property type="entry name" value="Clavaminate synthase-like"/>
    <property type="match status" value="1"/>
</dbReference>
<dbReference type="PROSITE" id="PS51471">
    <property type="entry name" value="FE2OG_OXY"/>
    <property type="match status" value="1"/>
</dbReference>
<dbReference type="PROSITE" id="PS00185">
    <property type="entry name" value="IPNS_1"/>
    <property type="match status" value="1"/>
</dbReference>
<dbReference type="PROSITE" id="PS00186">
    <property type="entry name" value="IPNS_2"/>
    <property type="match status" value="1"/>
</dbReference>
<accession>B6HLU0</accession>
<proteinExistence type="evidence at protein level"/>